<accession>A0QJV7</accession>
<organism>
    <name type="scientific">Mycobacterium avium (strain 104)</name>
    <dbReference type="NCBI Taxonomy" id="243243"/>
    <lineage>
        <taxon>Bacteria</taxon>
        <taxon>Bacillati</taxon>
        <taxon>Actinomycetota</taxon>
        <taxon>Actinomycetes</taxon>
        <taxon>Mycobacteriales</taxon>
        <taxon>Mycobacteriaceae</taxon>
        <taxon>Mycobacterium</taxon>
        <taxon>Mycobacterium avium complex (MAC)</taxon>
    </lineage>
</organism>
<keyword id="KW-1003">Cell membrane</keyword>
<keyword id="KW-0472">Membrane</keyword>
<keyword id="KW-0520">NAD</keyword>
<keyword id="KW-0874">Quinone</keyword>
<keyword id="KW-1278">Translocase</keyword>
<keyword id="KW-0812">Transmembrane</keyword>
<keyword id="KW-1133">Transmembrane helix</keyword>
<keyword id="KW-0813">Transport</keyword>
<dbReference type="EC" id="7.1.1.-" evidence="1"/>
<dbReference type="EMBL" id="CP000479">
    <property type="protein sequence ID" value="ABK66581.1"/>
    <property type="molecule type" value="Genomic_DNA"/>
</dbReference>
<dbReference type="RefSeq" id="WP_003874812.1">
    <property type="nucleotide sequence ID" value="NC_008595.1"/>
</dbReference>
<dbReference type="SMR" id="A0QJV7"/>
<dbReference type="GeneID" id="75271525"/>
<dbReference type="KEGG" id="mav:MAV_4043"/>
<dbReference type="HOGENOM" id="CLU_144724_0_0_11"/>
<dbReference type="Proteomes" id="UP000001574">
    <property type="component" value="Chromosome"/>
</dbReference>
<dbReference type="GO" id="GO:0030964">
    <property type="term" value="C:NADH dehydrogenase complex"/>
    <property type="evidence" value="ECO:0007669"/>
    <property type="project" value="TreeGrafter"/>
</dbReference>
<dbReference type="GO" id="GO:0005886">
    <property type="term" value="C:plasma membrane"/>
    <property type="evidence" value="ECO:0007669"/>
    <property type="project" value="UniProtKB-SubCell"/>
</dbReference>
<dbReference type="GO" id="GO:0050136">
    <property type="term" value="F:NADH:ubiquinone reductase (non-electrogenic) activity"/>
    <property type="evidence" value="ECO:0007669"/>
    <property type="project" value="UniProtKB-UniRule"/>
</dbReference>
<dbReference type="GO" id="GO:0048038">
    <property type="term" value="F:quinone binding"/>
    <property type="evidence" value="ECO:0007669"/>
    <property type="project" value="UniProtKB-KW"/>
</dbReference>
<dbReference type="GO" id="GO:0042773">
    <property type="term" value="P:ATP synthesis coupled electron transport"/>
    <property type="evidence" value="ECO:0007669"/>
    <property type="project" value="InterPro"/>
</dbReference>
<dbReference type="FunFam" id="1.10.287.3510:FF:000001">
    <property type="entry name" value="NADH-quinone oxidoreductase subunit K"/>
    <property type="match status" value="1"/>
</dbReference>
<dbReference type="Gene3D" id="1.10.287.3510">
    <property type="match status" value="1"/>
</dbReference>
<dbReference type="HAMAP" id="MF_01456">
    <property type="entry name" value="NDH1_NuoK"/>
    <property type="match status" value="1"/>
</dbReference>
<dbReference type="InterPro" id="IPR001133">
    <property type="entry name" value="NADH_UbQ_OxRdtase_chain4L/K"/>
</dbReference>
<dbReference type="InterPro" id="IPR039428">
    <property type="entry name" value="NUOK/Mnh_C1-like"/>
</dbReference>
<dbReference type="NCBIfam" id="NF004320">
    <property type="entry name" value="PRK05715.1-2"/>
    <property type="match status" value="1"/>
</dbReference>
<dbReference type="NCBIfam" id="NF004321">
    <property type="entry name" value="PRK05715.1-3"/>
    <property type="match status" value="1"/>
</dbReference>
<dbReference type="PANTHER" id="PTHR11434:SF21">
    <property type="entry name" value="NADH DEHYDROGENASE SUBUNIT 4L-RELATED"/>
    <property type="match status" value="1"/>
</dbReference>
<dbReference type="PANTHER" id="PTHR11434">
    <property type="entry name" value="NADH-UBIQUINONE OXIDOREDUCTASE SUBUNIT ND4L"/>
    <property type="match status" value="1"/>
</dbReference>
<dbReference type="Pfam" id="PF00420">
    <property type="entry name" value="Oxidored_q2"/>
    <property type="match status" value="1"/>
</dbReference>
<feature type="chain" id="PRO_0000390125" description="NADH-quinone oxidoreductase subunit K">
    <location>
        <begin position="1"/>
        <end position="99"/>
    </location>
</feature>
<feature type="transmembrane region" description="Helical" evidence="1">
    <location>
        <begin position="3"/>
        <end position="23"/>
    </location>
</feature>
<feature type="transmembrane region" description="Helical" evidence="1">
    <location>
        <begin position="28"/>
        <end position="48"/>
    </location>
</feature>
<feature type="transmembrane region" description="Helical" evidence="1">
    <location>
        <begin position="59"/>
        <end position="79"/>
    </location>
</feature>
<name>NUOK_MYCA1</name>
<protein>
    <recommendedName>
        <fullName evidence="1">NADH-quinone oxidoreductase subunit K</fullName>
        <ecNumber evidence="1">7.1.1.-</ecNumber>
    </recommendedName>
    <alternativeName>
        <fullName evidence="1">NADH dehydrogenase I subunit K</fullName>
    </alternativeName>
    <alternativeName>
        <fullName evidence="1">NDH-1 subunit K</fullName>
    </alternativeName>
</protein>
<evidence type="ECO:0000255" key="1">
    <source>
        <dbReference type="HAMAP-Rule" id="MF_01456"/>
    </source>
</evidence>
<reference key="1">
    <citation type="submission" date="2006-10" db="EMBL/GenBank/DDBJ databases">
        <authorList>
            <person name="Fleischmann R.D."/>
            <person name="Dodson R.J."/>
            <person name="Haft D.H."/>
            <person name="Merkel J.S."/>
            <person name="Nelson W.C."/>
            <person name="Fraser C.M."/>
        </authorList>
    </citation>
    <scope>NUCLEOTIDE SEQUENCE [LARGE SCALE GENOMIC DNA]</scope>
    <source>
        <strain>104</strain>
    </source>
</reference>
<proteinExistence type="inferred from homology"/>
<comment type="function">
    <text evidence="1">NDH-1 shuttles electrons from NADH, via FMN and iron-sulfur (Fe-S) centers, to quinones in the respiratory chain. The immediate electron acceptor for the enzyme in this species is believed to be a menaquinone. Couples the redox reaction to proton translocation (for every two electrons transferred, four hydrogen ions are translocated across the cytoplasmic membrane), and thus conserves the redox energy in a proton gradient.</text>
</comment>
<comment type="catalytic activity">
    <reaction evidence="1">
        <text>a quinone + NADH + 5 H(+)(in) = a quinol + NAD(+) + 4 H(+)(out)</text>
        <dbReference type="Rhea" id="RHEA:57888"/>
        <dbReference type="ChEBI" id="CHEBI:15378"/>
        <dbReference type="ChEBI" id="CHEBI:24646"/>
        <dbReference type="ChEBI" id="CHEBI:57540"/>
        <dbReference type="ChEBI" id="CHEBI:57945"/>
        <dbReference type="ChEBI" id="CHEBI:132124"/>
    </reaction>
</comment>
<comment type="subunit">
    <text evidence="1">NDH-1 is composed of 14 different subunits. Subunits NuoA, H, J, K, L, M, N constitute the membrane sector of the complex.</text>
</comment>
<comment type="subcellular location">
    <subcellularLocation>
        <location evidence="1">Cell membrane</location>
        <topology evidence="1">Multi-pass membrane protein</topology>
    </subcellularLocation>
</comment>
<comment type="similarity">
    <text evidence="1">Belongs to the complex I subunit 4L family.</text>
</comment>
<gene>
    <name evidence="1" type="primary">nuoK</name>
    <name type="ordered locus">MAV_4043</name>
</gene>
<sequence length="99" mass="10856">MNPINYLYLSALLFTIGAAGVLLRRNAIVMFMCVELMLNAVNLAFVTFARMHGHLDGQMIAFFTMVVAACEVVIGLAIIMTIFRTRKSASVDDANLLKG</sequence>